<dbReference type="EMBL" id="CP001398">
    <property type="protein sequence ID" value="ACS33357.1"/>
    <property type="molecule type" value="Genomic_DNA"/>
</dbReference>
<dbReference type="RefSeq" id="WP_014121354.1">
    <property type="nucleotide sequence ID" value="NC_012804.1"/>
</dbReference>
<dbReference type="SMR" id="C5A545"/>
<dbReference type="STRING" id="593117.TGAM_0855"/>
<dbReference type="PaxDb" id="593117-TGAM_0855"/>
<dbReference type="GeneID" id="7989022"/>
<dbReference type="KEGG" id="tga:TGAM_0855"/>
<dbReference type="PATRIC" id="fig|593117.10.peg.852"/>
<dbReference type="eggNOG" id="arCOG01885">
    <property type="taxonomic scope" value="Archaea"/>
</dbReference>
<dbReference type="HOGENOM" id="CLU_176720_1_0_2"/>
<dbReference type="OrthoDB" id="52479at2157"/>
<dbReference type="Proteomes" id="UP000001488">
    <property type="component" value="Chromosome"/>
</dbReference>
<dbReference type="GO" id="GO:0005829">
    <property type="term" value="C:cytosol"/>
    <property type="evidence" value="ECO:0007669"/>
    <property type="project" value="UniProtKB-ARBA"/>
</dbReference>
<dbReference type="GO" id="GO:1990904">
    <property type="term" value="C:ribonucleoprotein complex"/>
    <property type="evidence" value="ECO:0007669"/>
    <property type="project" value="UniProtKB-KW"/>
</dbReference>
<dbReference type="GO" id="GO:0005840">
    <property type="term" value="C:ribosome"/>
    <property type="evidence" value="ECO:0007669"/>
    <property type="project" value="UniProtKB-KW"/>
</dbReference>
<dbReference type="GO" id="GO:0003735">
    <property type="term" value="F:structural constituent of ribosome"/>
    <property type="evidence" value="ECO:0007669"/>
    <property type="project" value="InterPro"/>
</dbReference>
<dbReference type="GO" id="GO:0006412">
    <property type="term" value="P:translation"/>
    <property type="evidence" value="ECO:0007669"/>
    <property type="project" value="UniProtKB-UniRule"/>
</dbReference>
<dbReference type="Gene3D" id="1.10.60.20">
    <property type="entry name" value="Ribosomal protein S17e-like"/>
    <property type="match status" value="1"/>
</dbReference>
<dbReference type="HAMAP" id="MF_00511">
    <property type="entry name" value="Ribosomal_eS17"/>
    <property type="match status" value="1"/>
</dbReference>
<dbReference type="InterPro" id="IPR001210">
    <property type="entry name" value="Ribosomal_eS17"/>
</dbReference>
<dbReference type="InterPro" id="IPR018273">
    <property type="entry name" value="Ribosomal_eS17_CS"/>
</dbReference>
<dbReference type="InterPro" id="IPR036401">
    <property type="entry name" value="Ribosomal_eS17_sf"/>
</dbReference>
<dbReference type="NCBIfam" id="NF002242">
    <property type="entry name" value="PRK01151.1"/>
    <property type="match status" value="1"/>
</dbReference>
<dbReference type="PANTHER" id="PTHR10732">
    <property type="entry name" value="40S RIBOSOMAL PROTEIN S17"/>
    <property type="match status" value="1"/>
</dbReference>
<dbReference type="PANTHER" id="PTHR10732:SF0">
    <property type="entry name" value="40S RIBOSOMAL PROTEIN S17"/>
    <property type="match status" value="1"/>
</dbReference>
<dbReference type="Pfam" id="PF00833">
    <property type="entry name" value="Ribosomal_S17e"/>
    <property type="match status" value="1"/>
</dbReference>
<dbReference type="SUPFAM" id="SSF116820">
    <property type="entry name" value="Rps17e-like"/>
    <property type="match status" value="1"/>
</dbReference>
<dbReference type="PROSITE" id="PS00712">
    <property type="entry name" value="RIBOSOMAL_S17E"/>
    <property type="match status" value="1"/>
</dbReference>
<organism>
    <name type="scientific">Thermococcus gammatolerans (strain DSM 15229 / JCM 11827 / EJ3)</name>
    <dbReference type="NCBI Taxonomy" id="593117"/>
    <lineage>
        <taxon>Archaea</taxon>
        <taxon>Methanobacteriati</taxon>
        <taxon>Methanobacteriota</taxon>
        <taxon>Thermococci</taxon>
        <taxon>Thermococcales</taxon>
        <taxon>Thermococcaceae</taxon>
        <taxon>Thermococcus</taxon>
    </lineage>
</organism>
<evidence type="ECO:0000255" key="1">
    <source>
        <dbReference type="HAMAP-Rule" id="MF_00511"/>
    </source>
</evidence>
<evidence type="ECO:0000305" key="2"/>
<proteinExistence type="inferred from homology"/>
<accession>C5A545</accession>
<reference key="1">
    <citation type="journal article" date="2007" name="Genome Biol.">
        <title>Genome analysis and genome-wide proteomics of Thermococcus gammatolerans, the most radioresistant organism known amongst the Archaea.</title>
        <authorList>
            <person name="Zivanovic Y."/>
            <person name="Armengaud J."/>
            <person name="Lagorce A."/>
            <person name="Leplat C."/>
            <person name="Guerin P."/>
            <person name="Dutertre M."/>
            <person name="Anthouard V."/>
            <person name="Forterre P."/>
            <person name="Wincker P."/>
            <person name="Confalonieri F."/>
        </authorList>
    </citation>
    <scope>NUCLEOTIDE SEQUENCE [LARGE SCALE GENOMIC DNA]</scope>
    <source>
        <strain>DSM 15229 / JCM 11827 / EJ3</strain>
    </source>
</reference>
<sequence length="67" mass="8074">MGNIKQAFIKRTARELFDRYPDKFTRDFEHNKRMVQELTNVTSKTIRNRIAGYITRLVRMKEEGKIL</sequence>
<name>RS17E_THEGJ</name>
<protein>
    <recommendedName>
        <fullName evidence="1">Small ribosomal subunit protein eS17</fullName>
    </recommendedName>
    <alternativeName>
        <fullName evidence="2">30S ribosomal protein S17e</fullName>
    </alternativeName>
</protein>
<keyword id="KW-1185">Reference proteome</keyword>
<keyword id="KW-0687">Ribonucleoprotein</keyword>
<keyword id="KW-0689">Ribosomal protein</keyword>
<feature type="chain" id="PRO_1000206620" description="Small ribosomal subunit protein eS17">
    <location>
        <begin position="1"/>
        <end position="67"/>
    </location>
</feature>
<gene>
    <name evidence="1" type="primary">rps17e</name>
    <name type="ordered locus">TGAM_0855</name>
</gene>
<comment type="similarity">
    <text evidence="1">Belongs to the eukaryotic ribosomal protein eS17 family.</text>
</comment>